<gene>
    <name evidence="1" type="primary">anmK</name>
    <name type="ordered locus">Swit_1512</name>
</gene>
<feature type="chain" id="PRO_1000067371" description="Anhydro-N-acetylmuramic acid kinase">
    <location>
        <begin position="1"/>
        <end position="365"/>
    </location>
</feature>
<feature type="binding site" evidence="1">
    <location>
        <begin position="12"/>
        <end position="19"/>
    </location>
    <ligand>
        <name>ATP</name>
        <dbReference type="ChEBI" id="CHEBI:30616"/>
    </ligand>
</feature>
<dbReference type="EC" id="2.7.1.170" evidence="1"/>
<dbReference type="EMBL" id="CP000699">
    <property type="protein sequence ID" value="ABQ67875.1"/>
    <property type="molecule type" value="Genomic_DNA"/>
</dbReference>
<dbReference type="SMR" id="A5V6F9"/>
<dbReference type="STRING" id="392499.Swit_1512"/>
<dbReference type="PaxDb" id="392499-Swit_1512"/>
<dbReference type="KEGG" id="swi:Swit_1512"/>
<dbReference type="eggNOG" id="COG2377">
    <property type="taxonomic scope" value="Bacteria"/>
</dbReference>
<dbReference type="HOGENOM" id="CLU_038782_3_0_5"/>
<dbReference type="UniPathway" id="UPA00343"/>
<dbReference type="UniPathway" id="UPA00544"/>
<dbReference type="Proteomes" id="UP000001989">
    <property type="component" value="Chromosome"/>
</dbReference>
<dbReference type="GO" id="GO:0005524">
    <property type="term" value="F:ATP binding"/>
    <property type="evidence" value="ECO:0007669"/>
    <property type="project" value="UniProtKB-UniRule"/>
</dbReference>
<dbReference type="GO" id="GO:0016301">
    <property type="term" value="F:kinase activity"/>
    <property type="evidence" value="ECO:0007669"/>
    <property type="project" value="UniProtKB-KW"/>
</dbReference>
<dbReference type="GO" id="GO:0016773">
    <property type="term" value="F:phosphotransferase activity, alcohol group as acceptor"/>
    <property type="evidence" value="ECO:0007669"/>
    <property type="project" value="UniProtKB-UniRule"/>
</dbReference>
<dbReference type="GO" id="GO:0097175">
    <property type="term" value="P:1,6-anhydro-N-acetyl-beta-muramic acid catabolic process"/>
    <property type="evidence" value="ECO:0007669"/>
    <property type="project" value="UniProtKB-UniRule"/>
</dbReference>
<dbReference type="GO" id="GO:0006040">
    <property type="term" value="P:amino sugar metabolic process"/>
    <property type="evidence" value="ECO:0007669"/>
    <property type="project" value="InterPro"/>
</dbReference>
<dbReference type="GO" id="GO:0009254">
    <property type="term" value="P:peptidoglycan turnover"/>
    <property type="evidence" value="ECO:0007669"/>
    <property type="project" value="UniProtKB-UniRule"/>
</dbReference>
<dbReference type="CDD" id="cd24050">
    <property type="entry name" value="ASKHA_NBD_ANMK"/>
    <property type="match status" value="1"/>
</dbReference>
<dbReference type="Gene3D" id="3.30.420.40">
    <property type="match status" value="2"/>
</dbReference>
<dbReference type="HAMAP" id="MF_01270">
    <property type="entry name" value="AnhMurNAc_kinase"/>
    <property type="match status" value="1"/>
</dbReference>
<dbReference type="InterPro" id="IPR005338">
    <property type="entry name" value="Anhydro_N_Ac-Mur_kinase"/>
</dbReference>
<dbReference type="InterPro" id="IPR043129">
    <property type="entry name" value="ATPase_NBD"/>
</dbReference>
<dbReference type="NCBIfam" id="NF007141">
    <property type="entry name" value="PRK09585.1-5"/>
    <property type="match status" value="1"/>
</dbReference>
<dbReference type="PANTHER" id="PTHR30605">
    <property type="entry name" value="ANHYDRO-N-ACETYLMURAMIC ACID KINASE"/>
    <property type="match status" value="1"/>
</dbReference>
<dbReference type="PANTHER" id="PTHR30605:SF0">
    <property type="entry name" value="ANHYDRO-N-ACETYLMURAMIC ACID KINASE"/>
    <property type="match status" value="1"/>
</dbReference>
<dbReference type="Pfam" id="PF03702">
    <property type="entry name" value="AnmK"/>
    <property type="match status" value="1"/>
</dbReference>
<dbReference type="SUPFAM" id="SSF53067">
    <property type="entry name" value="Actin-like ATPase domain"/>
    <property type="match status" value="1"/>
</dbReference>
<protein>
    <recommendedName>
        <fullName evidence="1">Anhydro-N-acetylmuramic acid kinase</fullName>
        <ecNumber evidence="1">2.7.1.170</ecNumber>
    </recommendedName>
    <alternativeName>
        <fullName evidence="1">AnhMurNAc kinase</fullName>
    </alternativeName>
</protein>
<evidence type="ECO:0000255" key="1">
    <source>
        <dbReference type="HAMAP-Rule" id="MF_01270"/>
    </source>
</evidence>
<name>ANMK_RHIWR</name>
<accession>A5V6F9</accession>
<sequence>MTKMLAVGLMSGTSLDGIDAALIETDGAGHIRPIAFRSDPYAAQAREQLREAAALALSFDAPRPSPKIAAAEAMLTDRHVAAVRQLLAAARVEAGQVDVIGFHGQTIAHRPDRGWTWQIGDGAAMARALGIRVVNDLRSADVAAGGQGAPLLPVYHRALTAGMEGPVAVLNLGGVANITWLGAGEGELIAFDTGPANGLIDDWMLQETGSPYDAHGAFAARGTVDRAVLGAMLDNDWFDAPPPKSLDRADFTIQPARGLSAADGAATLTAFTAETVALALRHLPAPPRRLIVAGGGRHNPTLMKMIATATKITPEPIEALGWNGDATEAEGFAYMAVRSLKGQAISFPGTTGVAEPLTGGVTHRP</sequence>
<proteinExistence type="inferred from homology"/>
<reference key="1">
    <citation type="journal article" date="2010" name="J. Bacteriol.">
        <title>Genome sequence of the dioxin-mineralizing bacterium Sphingomonas wittichii RW1.</title>
        <authorList>
            <person name="Miller T.R."/>
            <person name="Delcher A.L."/>
            <person name="Salzberg S.L."/>
            <person name="Saunders E."/>
            <person name="Detter J.C."/>
            <person name="Halden R.U."/>
        </authorList>
    </citation>
    <scope>NUCLEOTIDE SEQUENCE [LARGE SCALE GENOMIC DNA]</scope>
    <source>
        <strain>DSM 6014 / CCUG 31198 / JCM 15750 / NBRC 105917 / EY 4224 / RW1</strain>
    </source>
</reference>
<keyword id="KW-0067">ATP-binding</keyword>
<keyword id="KW-0119">Carbohydrate metabolism</keyword>
<keyword id="KW-0418">Kinase</keyword>
<keyword id="KW-0547">Nucleotide-binding</keyword>
<keyword id="KW-1185">Reference proteome</keyword>
<keyword id="KW-0808">Transferase</keyword>
<comment type="function">
    <text evidence="1">Catalyzes the specific phosphorylation of 1,6-anhydro-N-acetylmuramic acid (anhMurNAc) with the simultaneous cleavage of the 1,6-anhydro ring, generating MurNAc-6-P. Is required for the utilization of anhMurNAc either imported from the medium or derived from its own cell wall murein, and thus plays a role in cell wall recycling.</text>
</comment>
<comment type="catalytic activity">
    <reaction evidence="1">
        <text>1,6-anhydro-N-acetyl-beta-muramate + ATP + H2O = N-acetyl-D-muramate 6-phosphate + ADP + H(+)</text>
        <dbReference type="Rhea" id="RHEA:24952"/>
        <dbReference type="ChEBI" id="CHEBI:15377"/>
        <dbReference type="ChEBI" id="CHEBI:15378"/>
        <dbReference type="ChEBI" id="CHEBI:30616"/>
        <dbReference type="ChEBI" id="CHEBI:58690"/>
        <dbReference type="ChEBI" id="CHEBI:58722"/>
        <dbReference type="ChEBI" id="CHEBI:456216"/>
        <dbReference type="EC" id="2.7.1.170"/>
    </reaction>
</comment>
<comment type="pathway">
    <text evidence="1">Amino-sugar metabolism; 1,6-anhydro-N-acetylmuramate degradation.</text>
</comment>
<comment type="pathway">
    <text evidence="1">Cell wall biogenesis; peptidoglycan recycling.</text>
</comment>
<comment type="similarity">
    <text evidence="1">Belongs to the anhydro-N-acetylmuramic acid kinase family.</text>
</comment>
<organism>
    <name type="scientific">Rhizorhabdus wittichii (strain DSM 6014 / CCUG 31198 / JCM 15750 / NBRC 105917 / EY 4224 / RW1)</name>
    <name type="common">Sphingomonas wittichii</name>
    <dbReference type="NCBI Taxonomy" id="392499"/>
    <lineage>
        <taxon>Bacteria</taxon>
        <taxon>Pseudomonadati</taxon>
        <taxon>Pseudomonadota</taxon>
        <taxon>Alphaproteobacteria</taxon>
        <taxon>Sphingomonadales</taxon>
        <taxon>Sphingomonadaceae</taxon>
        <taxon>Rhizorhabdus</taxon>
    </lineage>
</organism>